<sequence>MESPTKEIEEFESNSLKYLQPEQIEKIWLRLRGLRKYKKTSQRLRSLVKQLERGEASVVDLKKNLEYAATVLESVYIDETRRLLDTEDELSDIQSDAVPSEVRDWLASTFTRQMGMMLRRSDEKPRFKSIVHAVQAGIFVERMYRRTSNMVGLSYPPAVIEALKDVDKWSFDVFSLNEASGDHALKFIFYELLTRYDLISRFKIPISALVSFVEALEVGYSKHKNPYHNLMHAADVTQTVHYLLYKTGVANWLTELEIFAIIFSAAIHDYEHTGTTNNFHIQTRSDPAILYNDRSVLENHHLSAAYRLLQDDEEMNILINLSKDDWREFRTLVIEMVMATDMSCHFQQIKAMKTALQQPEAIEKPKALSLMLHTADISHPAKAWDLHHRWTMSLLEEFFRQGDREAELGLPFSPLCDRKSTMVAQSQVGFIDFIVEPTFTVLTDMTEKIVSPLIDETSQTGGTGQRRSSLNSISSSDAKRSGVKTSGSEGSAPINNSVISVDYKSFKATWTEVVHINRERWRAKVPKEEKAKKEAEEKARLAAEEQQKEMEAKSQAEEGASGKAEKKTSGETKNQVNGTRANKSDNPRGKNSKAEKSSGEQQQNGDFKDGKNKTDKKDHSNIGNDSKKTDGTKQRSHGSPAPSTSSTCRLTLPVIKPPLRHFKRPAYASSSYAPSVSKKTDEHPARYKMLDQRIKMKKIQNISHNWNRK</sequence>
<feature type="chain" id="PRO_0000198792" description="Dual specificity calcium/calmodulin-dependent 3',5'-cyclic nucleotide phosphodiesterase 1C">
    <location>
        <begin position="1"/>
        <end position="709"/>
    </location>
</feature>
<feature type="domain" description="PDEase" evidence="5">
    <location>
        <begin position="151"/>
        <end position="528"/>
    </location>
</feature>
<feature type="region of interest" description="Calmodulin-binding" evidence="2">
    <location>
        <begin position="123"/>
        <end position="146"/>
    </location>
</feature>
<feature type="region of interest" description="Disordered" evidence="6">
    <location>
        <begin position="453"/>
        <end position="495"/>
    </location>
</feature>
<feature type="region of interest" description="Disordered" evidence="6">
    <location>
        <begin position="523"/>
        <end position="650"/>
    </location>
</feature>
<feature type="compositionally biased region" description="Polar residues" evidence="6">
    <location>
        <begin position="483"/>
        <end position="495"/>
    </location>
</feature>
<feature type="compositionally biased region" description="Basic and acidic residues" evidence="6">
    <location>
        <begin position="523"/>
        <end position="556"/>
    </location>
</feature>
<feature type="compositionally biased region" description="Polar residues" evidence="6">
    <location>
        <begin position="571"/>
        <end position="581"/>
    </location>
</feature>
<feature type="compositionally biased region" description="Basic and acidic residues" evidence="6">
    <location>
        <begin position="582"/>
        <end position="598"/>
    </location>
</feature>
<feature type="compositionally biased region" description="Basic and acidic residues" evidence="6">
    <location>
        <begin position="606"/>
        <end position="633"/>
    </location>
</feature>
<feature type="active site" description="Proton donor" evidence="1">
    <location>
        <position position="228"/>
    </location>
</feature>
<feature type="binding site" evidence="3">
    <location>
        <position position="232"/>
    </location>
    <ligand>
        <name>Zn(2+)</name>
        <dbReference type="ChEBI" id="CHEBI:29105"/>
    </ligand>
</feature>
<feature type="binding site" evidence="3">
    <location>
        <position position="268"/>
    </location>
    <ligand>
        <name>Zn(2+)</name>
        <dbReference type="ChEBI" id="CHEBI:29105"/>
    </ligand>
</feature>
<feature type="binding site" evidence="3">
    <location>
        <position position="269"/>
    </location>
    <ligand>
        <name>Mg(2+)</name>
        <dbReference type="ChEBI" id="CHEBI:18420"/>
    </ligand>
</feature>
<feature type="binding site" evidence="3">
    <location>
        <position position="269"/>
    </location>
    <ligand>
        <name>Zn(2+)</name>
        <dbReference type="ChEBI" id="CHEBI:29105"/>
    </ligand>
</feature>
<feature type="binding site" evidence="3">
    <location>
        <position position="376"/>
    </location>
    <ligand>
        <name>Zn(2+)</name>
        <dbReference type="ChEBI" id="CHEBI:29105"/>
    </ligand>
</feature>
<feature type="modified residue" description="N-acetylmethionine" evidence="15">
    <location>
        <position position="1"/>
    </location>
</feature>
<feature type="splice variant" id="VSP_044468" description="In isoform 3." evidence="9">
    <original>MESPTKEIEEFESNSLKYLQPEQIEKIWLRLRGLRKYK</original>
    <variation>MTDAGNRKEGFKKCRSATFSIDGYSFTIVANEAGDKNARPLARFSRSKSQNCLWNSLIDGLTGNVKEKPRPTIVHDPRPPEEILADELPQLDSSEVLV</variation>
    <location>
        <begin position="1"/>
        <end position="38"/>
    </location>
</feature>
<feature type="splice variant" id="VSP_004552" description="In isoform PDE1C1." evidence="10">
    <original>GTKQ</original>
    <variation>DSQE</variation>
    <location>
        <begin position="631"/>
        <end position="634"/>
    </location>
</feature>
<feature type="splice variant" id="VSP_004553" description="In isoform PDE1C1." evidence="10">
    <location>
        <begin position="635"/>
        <end position="709"/>
    </location>
</feature>
<feature type="sequence variant" id="VAR_081215" description="In DFNA74; increased 3',5'-cyclic-AMP phosphodiesterase activity; increased 3',5'-cyclic-GMP phosphodiesterase activity; approximately 10-fold increase in 3',5'-cyclic-AMP and 3-fold for 3',5'-cyclic-GMP compared to wild-type; dbSNP:rs775633137." evidence="7">
    <original>A</original>
    <variation>S</variation>
    <location>
        <position position="260"/>
    </location>
</feature>
<feature type="sequence conflict" description="In Ref. 2; BAC03734." evidence="11" ref="2">
    <original>Q</original>
    <variation>F</variation>
    <location>
        <position position="42"/>
    </location>
</feature>
<feature type="sequence conflict" description="In Ref. 2; BAC03734." evidence="11" ref="2">
    <original>R</original>
    <variation>L</variation>
    <location>
        <position position="126"/>
    </location>
</feature>
<feature type="sequence conflict" description="In Ref. 2; BAC03734." evidence="11" ref="2">
    <original>A</original>
    <variation>V</variation>
    <location sequence="Q14123-3">
        <position position="4"/>
    </location>
</feature>
<proteinExistence type="evidence at protein level"/>
<organism>
    <name type="scientific">Homo sapiens</name>
    <name type="common">Human</name>
    <dbReference type="NCBI Taxonomy" id="9606"/>
    <lineage>
        <taxon>Eukaryota</taxon>
        <taxon>Metazoa</taxon>
        <taxon>Chordata</taxon>
        <taxon>Craniata</taxon>
        <taxon>Vertebrata</taxon>
        <taxon>Euteleostomi</taxon>
        <taxon>Mammalia</taxon>
        <taxon>Eutheria</taxon>
        <taxon>Euarchontoglires</taxon>
        <taxon>Primates</taxon>
        <taxon>Haplorrhini</taxon>
        <taxon>Catarrhini</taxon>
        <taxon>Hominidae</taxon>
        <taxon>Homo</taxon>
    </lineage>
</organism>
<name>PDE1C_HUMAN</name>
<evidence type="ECO:0000250" key="1">
    <source>
        <dbReference type="UniProtKB" id="O76083"/>
    </source>
</evidence>
<evidence type="ECO:0000250" key="2">
    <source>
        <dbReference type="UniProtKB" id="P14100"/>
    </source>
</evidence>
<evidence type="ECO:0000250" key="3">
    <source>
        <dbReference type="UniProtKB" id="Q01064"/>
    </source>
</evidence>
<evidence type="ECO:0000250" key="4">
    <source>
        <dbReference type="UniProtKB" id="Q64338"/>
    </source>
</evidence>
<evidence type="ECO:0000255" key="5">
    <source>
        <dbReference type="PROSITE-ProRule" id="PRU01192"/>
    </source>
</evidence>
<evidence type="ECO:0000256" key="6">
    <source>
        <dbReference type="SAM" id="MobiDB-lite"/>
    </source>
</evidence>
<evidence type="ECO:0000269" key="7">
    <source>
    </source>
</evidence>
<evidence type="ECO:0000269" key="8">
    <source>
    </source>
</evidence>
<evidence type="ECO:0000303" key="9">
    <source>
    </source>
</evidence>
<evidence type="ECO:0000303" key="10">
    <source>
    </source>
</evidence>
<evidence type="ECO:0000305" key="11"/>
<evidence type="ECO:0000305" key="12">
    <source>
    </source>
</evidence>
<evidence type="ECO:0000305" key="13">
    <source>
    </source>
</evidence>
<evidence type="ECO:0000312" key="14">
    <source>
        <dbReference type="HGNC" id="HGNC:8776"/>
    </source>
</evidence>
<evidence type="ECO:0007744" key="15">
    <source>
    </source>
</evidence>
<dbReference type="EC" id="3.1.4.17" evidence="7 8"/>
<dbReference type="EMBL" id="U40371">
    <property type="protein sequence ID" value="AAC50437.1"/>
    <property type="molecule type" value="mRNA"/>
</dbReference>
<dbReference type="EMBL" id="U40372">
    <property type="protein sequence ID" value="AAA96961.1"/>
    <property type="molecule type" value="mRNA"/>
</dbReference>
<dbReference type="EMBL" id="AK056170">
    <property type="protein sequence ID" value="BAG51638.1"/>
    <property type="molecule type" value="mRNA"/>
</dbReference>
<dbReference type="EMBL" id="AK091734">
    <property type="protein sequence ID" value="BAC03734.1"/>
    <property type="molecule type" value="mRNA"/>
</dbReference>
<dbReference type="EMBL" id="AC004931">
    <property type="status" value="NOT_ANNOTATED_CDS"/>
    <property type="molecule type" value="Genomic_DNA"/>
</dbReference>
<dbReference type="EMBL" id="AC005589">
    <property type="status" value="NOT_ANNOTATED_CDS"/>
    <property type="molecule type" value="Genomic_DNA"/>
</dbReference>
<dbReference type="EMBL" id="AC006377">
    <property type="status" value="NOT_ANNOTATED_CDS"/>
    <property type="molecule type" value="Genomic_DNA"/>
</dbReference>
<dbReference type="EMBL" id="AC007033">
    <property type="status" value="NOT_ANNOTATED_CDS"/>
    <property type="molecule type" value="Genomic_DNA"/>
</dbReference>
<dbReference type="EMBL" id="AC007093">
    <property type="status" value="NOT_ANNOTATED_CDS"/>
    <property type="molecule type" value="Genomic_DNA"/>
</dbReference>
<dbReference type="EMBL" id="AC018637">
    <property type="status" value="NOT_ANNOTATED_CDS"/>
    <property type="molecule type" value="Genomic_DNA"/>
</dbReference>
<dbReference type="CCDS" id="CCDS5437.1">
    <molecule id="Q14123-2"/>
</dbReference>
<dbReference type="CCDS" id="CCDS55099.1">
    <molecule id="Q14123-1"/>
</dbReference>
<dbReference type="CCDS" id="CCDS55100.1">
    <molecule id="Q14123-3"/>
</dbReference>
<dbReference type="RefSeq" id="NP_001177985.1">
    <molecule id="Q14123-2"/>
    <property type="nucleotide sequence ID" value="NM_001191056.3"/>
</dbReference>
<dbReference type="RefSeq" id="NP_001177986.1">
    <molecule id="Q14123-1"/>
    <property type="nucleotide sequence ID" value="NM_001191057.4"/>
</dbReference>
<dbReference type="RefSeq" id="NP_001177987.2">
    <property type="nucleotide sequence ID" value="NM_001191058.3"/>
</dbReference>
<dbReference type="RefSeq" id="NP_001177988.1">
    <molecule id="Q14123-1"/>
    <property type="nucleotide sequence ID" value="NM_001191059.4"/>
</dbReference>
<dbReference type="RefSeq" id="NP_001308984.1">
    <molecule id="Q14123-1"/>
    <property type="nucleotide sequence ID" value="NM_001322055.2"/>
</dbReference>
<dbReference type="RefSeq" id="NP_001308985.1">
    <molecule id="Q14123-2"/>
    <property type="nucleotide sequence ID" value="NM_001322056.2"/>
</dbReference>
<dbReference type="RefSeq" id="NP_001308986.1">
    <molecule id="Q14123-2"/>
    <property type="nucleotide sequence ID" value="NM_001322057.2"/>
</dbReference>
<dbReference type="RefSeq" id="NP_001308987.1">
    <property type="nucleotide sequence ID" value="NM_001322058.1"/>
</dbReference>
<dbReference type="RefSeq" id="NP_001308988.1">
    <property type="nucleotide sequence ID" value="NM_001322059.1"/>
</dbReference>
<dbReference type="RefSeq" id="NP_005011.1">
    <molecule id="Q14123-2"/>
    <property type="nucleotide sequence ID" value="NM_005020.5"/>
</dbReference>
<dbReference type="RefSeq" id="XP_016867756.1">
    <molecule id="Q14123-1"/>
    <property type="nucleotide sequence ID" value="XM_017012267.2"/>
</dbReference>
<dbReference type="RefSeq" id="XP_047276396.1">
    <molecule id="Q14123-1"/>
    <property type="nucleotide sequence ID" value="XM_047420440.1"/>
</dbReference>
<dbReference type="RefSeq" id="XP_047276400.1">
    <molecule id="Q14123-2"/>
    <property type="nucleotide sequence ID" value="XM_047420444.1"/>
</dbReference>
<dbReference type="RefSeq" id="XP_054214308.1">
    <molecule id="Q14123-1"/>
    <property type="nucleotide sequence ID" value="XM_054358333.1"/>
</dbReference>
<dbReference type="RefSeq" id="XP_054214309.1">
    <molecule id="Q14123-1"/>
    <property type="nucleotide sequence ID" value="XM_054358334.1"/>
</dbReference>
<dbReference type="RefSeq" id="XP_054214313.1">
    <molecule id="Q14123-2"/>
    <property type="nucleotide sequence ID" value="XM_054358338.1"/>
</dbReference>
<dbReference type="SMR" id="Q14123"/>
<dbReference type="BioGRID" id="111163">
    <property type="interactions" value="55"/>
</dbReference>
<dbReference type="CORUM" id="Q14123"/>
<dbReference type="FunCoup" id="Q14123">
    <property type="interactions" value="1206"/>
</dbReference>
<dbReference type="IntAct" id="Q14123">
    <property type="interactions" value="3"/>
</dbReference>
<dbReference type="STRING" id="9606.ENSP00000379496"/>
<dbReference type="BindingDB" id="Q14123"/>
<dbReference type="ChEMBL" id="CHEMBL4619"/>
<dbReference type="DrugBank" id="DB00201">
    <property type="generic name" value="Caffeine"/>
</dbReference>
<dbReference type="DrugBank" id="DB09283">
    <property type="generic name" value="Trapidil"/>
</dbReference>
<dbReference type="DrugCentral" id="Q14123"/>
<dbReference type="GuidetoPHARMACOLOGY" id="1296"/>
<dbReference type="GlyGen" id="Q14123">
    <property type="glycosylation" value="1 site, 1 O-linked glycan (1 site)"/>
</dbReference>
<dbReference type="iPTMnet" id="Q14123"/>
<dbReference type="PhosphoSitePlus" id="Q14123"/>
<dbReference type="BioMuta" id="PDE1C"/>
<dbReference type="DMDM" id="2499445"/>
<dbReference type="jPOST" id="Q14123"/>
<dbReference type="MassIVE" id="Q14123"/>
<dbReference type="PaxDb" id="9606-ENSP00000379496"/>
<dbReference type="PeptideAtlas" id="Q14123"/>
<dbReference type="ProteomicsDB" id="19840"/>
<dbReference type="ProteomicsDB" id="59827">
    <molecule id="Q14123-1"/>
</dbReference>
<dbReference type="ProteomicsDB" id="59828">
    <molecule id="Q14123-2"/>
</dbReference>
<dbReference type="Antibodypedia" id="12721">
    <property type="antibodies" value="176 antibodies from 27 providers"/>
</dbReference>
<dbReference type="DNASU" id="5137"/>
<dbReference type="Ensembl" id="ENST00000321453.12">
    <molecule id="Q14123-1"/>
    <property type="protein sequence ID" value="ENSP00000318105.7"/>
    <property type="gene ID" value="ENSG00000154678.18"/>
</dbReference>
<dbReference type="Ensembl" id="ENST00000396182.6">
    <molecule id="Q14123-2"/>
    <property type="protein sequence ID" value="ENSP00000379485.2"/>
    <property type="gene ID" value="ENSG00000154678.18"/>
</dbReference>
<dbReference type="Ensembl" id="ENST00000396184.7">
    <molecule id="Q14123-2"/>
    <property type="protein sequence ID" value="ENSP00000379487.3"/>
    <property type="gene ID" value="ENSG00000154678.18"/>
</dbReference>
<dbReference type="Ensembl" id="ENST00000396191.6">
    <molecule id="Q14123-1"/>
    <property type="protein sequence ID" value="ENSP00000379494.1"/>
    <property type="gene ID" value="ENSG00000154678.18"/>
</dbReference>
<dbReference type="GeneID" id="5137"/>
<dbReference type="KEGG" id="hsa:5137"/>
<dbReference type="MANE-Select" id="ENST00000396191.6">
    <property type="protein sequence ID" value="ENSP00000379494.1"/>
    <property type="RefSeq nucleotide sequence ID" value="NM_001191057.4"/>
    <property type="RefSeq protein sequence ID" value="NP_001177986.1"/>
</dbReference>
<dbReference type="UCSC" id="uc003tcm.3">
    <molecule id="Q14123-1"/>
    <property type="organism name" value="human"/>
</dbReference>
<dbReference type="AGR" id="HGNC:8776"/>
<dbReference type="CTD" id="5137"/>
<dbReference type="DisGeNET" id="5137"/>
<dbReference type="GeneCards" id="PDE1C"/>
<dbReference type="HGNC" id="HGNC:8776">
    <property type="gene designation" value="PDE1C"/>
</dbReference>
<dbReference type="HPA" id="ENSG00000154678">
    <property type="expression patterns" value="Tissue enhanced (brain, heart muscle)"/>
</dbReference>
<dbReference type="MalaCards" id="PDE1C"/>
<dbReference type="MIM" id="602987">
    <property type="type" value="gene"/>
</dbReference>
<dbReference type="MIM" id="618140">
    <property type="type" value="phenotype"/>
</dbReference>
<dbReference type="neXtProt" id="NX_Q14123"/>
<dbReference type="OpenTargets" id="ENSG00000154678"/>
<dbReference type="Orphanet" id="90635">
    <property type="disease" value="Rare autosomal dominant non-syndromic sensorineural deafness type DFNA"/>
</dbReference>
<dbReference type="PharmGKB" id="PA33124"/>
<dbReference type="VEuPathDB" id="HostDB:ENSG00000154678"/>
<dbReference type="eggNOG" id="KOG3688">
    <property type="taxonomic scope" value="Eukaryota"/>
</dbReference>
<dbReference type="GeneTree" id="ENSGT00940000155331"/>
<dbReference type="InParanoid" id="Q14123"/>
<dbReference type="OMA" id="SFRLMRD"/>
<dbReference type="OrthoDB" id="189220at2759"/>
<dbReference type="PAN-GO" id="Q14123">
    <property type="GO annotations" value="3 GO annotations based on evolutionary models"/>
</dbReference>
<dbReference type="PhylomeDB" id="Q14123"/>
<dbReference type="TreeFam" id="TF314638"/>
<dbReference type="BRENDA" id="3.1.4.17">
    <property type="organism ID" value="2681"/>
</dbReference>
<dbReference type="PathwayCommons" id="Q14123"/>
<dbReference type="Reactome" id="R-HSA-111957">
    <property type="pathway name" value="Cam-PDE 1 activation"/>
</dbReference>
<dbReference type="SignaLink" id="Q14123"/>
<dbReference type="SIGNOR" id="Q14123"/>
<dbReference type="BioGRID-ORCS" id="5137">
    <property type="hits" value="14 hits in 1146 CRISPR screens"/>
</dbReference>
<dbReference type="ChiTaRS" id="PDE1C">
    <property type="organism name" value="human"/>
</dbReference>
<dbReference type="GeneWiki" id="PDE1C"/>
<dbReference type="GenomeRNAi" id="5137"/>
<dbReference type="Pharos" id="Q14123">
    <property type="development level" value="Tclin"/>
</dbReference>
<dbReference type="PRO" id="PR:Q14123"/>
<dbReference type="Proteomes" id="UP000005640">
    <property type="component" value="Chromosome 7"/>
</dbReference>
<dbReference type="RNAct" id="Q14123">
    <property type="molecule type" value="protein"/>
</dbReference>
<dbReference type="Bgee" id="ENSG00000154678">
    <property type="expression patterns" value="Expressed in endothelial cell and 147 other cell types or tissues"/>
</dbReference>
<dbReference type="ExpressionAtlas" id="Q14123">
    <property type="expression patterns" value="baseline and differential"/>
</dbReference>
<dbReference type="GO" id="GO:0005829">
    <property type="term" value="C:cytosol"/>
    <property type="evidence" value="ECO:0000304"/>
    <property type="project" value="Reactome"/>
</dbReference>
<dbReference type="GO" id="GO:0005764">
    <property type="term" value="C:lysosome"/>
    <property type="evidence" value="ECO:0000250"/>
    <property type="project" value="UniProtKB"/>
</dbReference>
<dbReference type="GO" id="GO:0043025">
    <property type="term" value="C:neuronal cell body"/>
    <property type="evidence" value="ECO:0000318"/>
    <property type="project" value="GO_Central"/>
</dbReference>
<dbReference type="GO" id="GO:0004115">
    <property type="term" value="F:3',5'-cyclic-AMP phosphodiesterase activity"/>
    <property type="evidence" value="ECO:0000314"/>
    <property type="project" value="UniProtKB"/>
</dbReference>
<dbReference type="GO" id="GO:0047555">
    <property type="term" value="F:3',5'-cyclic-GMP phosphodiesterase activity"/>
    <property type="evidence" value="ECO:0000314"/>
    <property type="project" value="UniProtKB"/>
</dbReference>
<dbReference type="GO" id="GO:0005516">
    <property type="term" value="F:calmodulin binding"/>
    <property type="evidence" value="ECO:0007669"/>
    <property type="project" value="UniProtKB-KW"/>
</dbReference>
<dbReference type="GO" id="GO:0048101">
    <property type="term" value="F:calmodulin-activated 3',5'-cyclic-GMP phosphodiesterase activity"/>
    <property type="evidence" value="ECO:0000318"/>
    <property type="project" value="GO_Central"/>
</dbReference>
<dbReference type="GO" id="GO:0004117">
    <property type="term" value="F:calmodulin-activated dual specificity 3',5'-cyclic-GMP, 3',5'-cyclic-AMP phosphodiesterase activity"/>
    <property type="evidence" value="ECO:0000314"/>
    <property type="project" value="UniProtKB"/>
</dbReference>
<dbReference type="GO" id="GO:0046872">
    <property type="term" value="F:metal ion binding"/>
    <property type="evidence" value="ECO:0007669"/>
    <property type="project" value="UniProtKB-KW"/>
</dbReference>
<dbReference type="GO" id="GO:0019933">
    <property type="term" value="P:cAMP-mediated signaling"/>
    <property type="evidence" value="ECO:0000318"/>
    <property type="project" value="GO_Central"/>
</dbReference>
<dbReference type="CDD" id="cd00077">
    <property type="entry name" value="HDc"/>
    <property type="match status" value="1"/>
</dbReference>
<dbReference type="FunFam" id="1.10.1300.10:FF:000010">
    <property type="entry name" value="Phosphodiesterase"/>
    <property type="match status" value="1"/>
</dbReference>
<dbReference type="Gene3D" id="1.10.1300.10">
    <property type="entry name" value="3'5'-cyclic nucleotide phosphodiesterase, catalytic domain"/>
    <property type="match status" value="1"/>
</dbReference>
<dbReference type="InterPro" id="IPR003607">
    <property type="entry name" value="HD/PDEase_dom"/>
</dbReference>
<dbReference type="InterPro" id="IPR023088">
    <property type="entry name" value="PDEase"/>
</dbReference>
<dbReference type="InterPro" id="IPR002073">
    <property type="entry name" value="PDEase_catalytic_dom"/>
</dbReference>
<dbReference type="InterPro" id="IPR036971">
    <property type="entry name" value="PDEase_catalytic_dom_sf"/>
</dbReference>
<dbReference type="InterPro" id="IPR023174">
    <property type="entry name" value="PDEase_CS"/>
</dbReference>
<dbReference type="InterPro" id="IPR013706">
    <property type="entry name" value="PDEase_N"/>
</dbReference>
<dbReference type="PANTHER" id="PTHR11347">
    <property type="entry name" value="CYCLIC NUCLEOTIDE PHOSPHODIESTERASE"/>
    <property type="match status" value="1"/>
</dbReference>
<dbReference type="Pfam" id="PF00233">
    <property type="entry name" value="PDEase_I"/>
    <property type="match status" value="1"/>
</dbReference>
<dbReference type="Pfam" id="PF08499">
    <property type="entry name" value="PDEase_I_N"/>
    <property type="match status" value="1"/>
</dbReference>
<dbReference type="PRINTS" id="PR00387">
    <property type="entry name" value="PDIESTERASE1"/>
</dbReference>
<dbReference type="SMART" id="SM00471">
    <property type="entry name" value="HDc"/>
    <property type="match status" value="1"/>
</dbReference>
<dbReference type="SUPFAM" id="SSF109604">
    <property type="entry name" value="HD-domain/PDEase-like"/>
    <property type="match status" value="1"/>
</dbReference>
<dbReference type="PROSITE" id="PS00126">
    <property type="entry name" value="PDEASE_I_1"/>
    <property type="match status" value="1"/>
</dbReference>
<dbReference type="PROSITE" id="PS51845">
    <property type="entry name" value="PDEASE_I_2"/>
    <property type="match status" value="1"/>
</dbReference>
<comment type="function">
    <text evidence="7 8 12">Calmodulin-dependent cyclic nucleotide phosphodiesterase with a dual specificity for the second messengers cAMP and cGMP, which are key regulators of many important physiological processes (PubMed:29860631, PubMed:8557689). Has a high affinity for both cAMP and cGMP (PubMed:8557689). Modulates the amplitude and duration of the cAMP signal in sensory cilia in response to odorant stimulation, hence contributing to the generation of action potentials. Regulates smooth muscle cell proliferation. Regulates the stability of growth factor receptors, including PDGFRB (Probable).</text>
</comment>
<comment type="catalytic activity">
    <reaction evidence="7 8">
        <text>a nucleoside 3',5'-cyclic phosphate + H2O = a nucleoside 5'-phosphate + H(+)</text>
        <dbReference type="Rhea" id="RHEA:14653"/>
        <dbReference type="ChEBI" id="CHEBI:15377"/>
        <dbReference type="ChEBI" id="CHEBI:15378"/>
        <dbReference type="ChEBI" id="CHEBI:57867"/>
        <dbReference type="ChEBI" id="CHEBI:58464"/>
        <dbReference type="EC" id="3.1.4.17"/>
    </reaction>
    <physiologicalReaction direction="left-to-right" evidence="13">
        <dbReference type="Rhea" id="RHEA:14654"/>
    </physiologicalReaction>
</comment>
<comment type="catalytic activity">
    <reaction evidence="7 8">
        <text>3',5'-cyclic GMP + H2O = GMP + H(+)</text>
        <dbReference type="Rhea" id="RHEA:16957"/>
        <dbReference type="ChEBI" id="CHEBI:15377"/>
        <dbReference type="ChEBI" id="CHEBI:15378"/>
        <dbReference type="ChEBI" id="CHEBI:57746"/>
        <dbReference type="ChEBI" id="CHEBI:58115"/>
    </reaction>
    <physiologicalReaction direction="left-to-right" evidence="13">
        <dbReference type="Rhea" id="RHEA:16958"/>
    </physiologicalReaction>
</comment>
<comment type="catalytic activity">
    <reaction evidence="7 8">
        <text>3',5'-cyclic AMP + H2O = AMP + H(+)</text>
        <dbReference type="Rhea" id="RHEA:25277"/>
        <dbReference type="ChEBI" id="CHEBI:15377"/>
        <dbReference type="ChEBI" id="CHEBI:15378"/>
        <dbReference type="ChEBI" id="CHEBI:58165"/>
        <dbReference type="ChEBI" id="CHEBI:456215"/>
    </reaction>
    <physiologicalReaction direction="left-to-right" evidence="13">
        <dbReference type="Rhea" id="RHEA:25278"/>
    </physiologicalReaction>
</comment>
<comment type="cofactor">
    <cofactor evidence="3">
        <name>Zn(2+)</name>
        <dbReference type="ChEBI" id="CHEBI:29105"/>
    </cofactor>
    <text evidence="3">Binds 2 divalent metal cations per subunit. Site 1 may preferentially bind zinc ions.</text>
</comment>
<comment type="cofactor">
    <cofactor evidence="3">
        <name>Mg(2+)</name>
        <dbReference type="ChEBI" id="CHEBI:18420"/>
    </cofactor>
    <text evidence="3">Binds 2 divalent metal cations per subunit. Site 2 has a preference for magnesium ions.</text>
</comment>
<comment type="activity regulation">
    <text evidence="4">Type I PDE are activated by the binding of calmodulin in the presence of Ca(2+).</text>
</comment>
<comment type="biophysicochemical properties">
    <molecule>Isoform PDE1C2</molecule>
    <kinetics>
        <KM evidence="8">0.3 uM for 3',5'-cyclic AMP</KM>
        <KM evidence="8">0.6 uM for 3',5'-cyclic GMP</KM>
    </kinetics>
</comment>
<comment type="subunit">
    <text evidence="2">Homodimer.</text>
</comment>
<comment type="subcellular location">
    <subcellularLocation>
        <location evidence="4">Lysosome</location>
    </subcellularLocation>
</comment>
<comment type="alternative products">
    <event type="alternative splicing"/>
    <isoform>
        <id>Q14123-1</id>
        <name>PDE1C2</name>
        <name evidence="10">Hcam3a</name>
        <name evidence="10">PDE1C3</name>
        <name evidence="10">HSPDE1C3A</name>
        <name evidence="10">HSPDE1C3</name>
        <sequence type="displayed"/>
    </isoform>
    <isoform>
        <id>Q14123-2</id>
        <name evidence="10">PDE1C1</name>
        <name evidence="10">Hcam3b</name>
        <name evidence="10">HSPDE1C1A</name>
        <sequence type="described" ref="VSP_004552 VSP_004553"/>
    </isoform>
    <isoform>
        <id>Q14123-3</id>
        <name>3</name>
        <sequence type="described" ref="VSP_044468"/>
    </isoform>
</comment>
<comment type="tissue specificity">
    <text evidence="8">Isoform PDE1C2 is present in the heart and brain and, at lower levels in the lung, liver, kidney and skeletal muscle (PubMed:8557689). Isoform PDE1C1 is expressed in the heart and brain and, at lower levels in lung (PubMed:8557689). Also expressed at low levels in uterus and testis (PubMed:8557689).</text>
</comment>
<comment type="disease" evidence="7">
    <disease id="DI-05344">
        <name>Deafness, autosomal dominant, 74</name>
        <acronym>DFNA74</acronym>
        <description>A form of non-syndromic deafness characterized by progressive, postlingual hearing loss with onset in the third decade of life.</description>
        <dbReference type="MIM" id="618140"/>
    </disease>
    <text>The disease is caused by variants affecting the gene represented in this entry.</text>
</comment>
<comment type="similarity">
    <text evidence="11">Belongs to the cyclic nucleotide phosphodiesterase family. PDE1 subfamily.</text>
</comment>
<protein>
    <recommendedName>
        <fullName evidence="13">Dual specificity calcium/calmodulin-dependent 3',5'-cyclic nucleotide phosphodiesterase 1C</fullName>
        <shortName>Cam-PDE 1C</shortName>
        <ecNumber evidence="7 8">3.1.4.17</ecNumber>
    </recommendedName>
    <alternativeName>
        <fullName evidence="10">Hcam3</fullName>
    </alternativeName>
</protein>
<accession>Q14123</accession>
<accession>B3KPC6</accession>
<accession>E9PE92</accession>
<accession>Q14124</accession>
<accession>Q8NB10</accession>
<reference key="1">
    <citation type="journal article" date="1996" name="J. Biol. Chem.">
        <title>Isolation and characterization of cDNAs corresponding to two human calcium, calmodulin-regulated, 3',5'-cyclic nucleotide phosphodiesterases.</title>
        <authorList>
            <person name="Loughney K."/>
            <person name="Martins T.J."/>
            <person name="Harris E.A.S."/>
            <person name="Sadhu K."/>
            <person name="Hicks J.B."/>
            <person name="Sonnenburg W.K."/>
            <person name="Beavo J.A."/>
            <person name="Ferguson K."/>
        </authorList>
    </citation>
    <scope>NUCLEOTIDE SEQUENCE [MRNA] (ISOFORMS PDE1C1 AND PDE1C2)</scope>
    <scope>FUNCTION</scope>
    <scope>CATALYTIC ACTIVITY</scope>
    <scope>BIOPHYSICOCHEMICAL PROPERTIES</scope>
    <scope>TISSUE SPECIFICITY</scope>
    <source>
        <tissue>Heart</tissue>
    </source>
</reference>
<reference key="2">
    <citation type="journal article" date="2004" name="Nat. Genet.">
        <title>Complete sequencing and characterization of 21,243 full-length human cDNAs.</title>
        <authorList>
            <person name="Ota T."/>
            <person name="Suzuki Y."/>
            <person name="Nishikawa T."/>
            <person name="Otsuki T."/>
            <person name="Sugiyama T."/>
            <person name="Irie R."/>
            <person name="Wakamatsu A."/>
            <person name="Hayashi K."/>
            <person name="Sato H."/>
            <person name="Nagai K."/>
            <person name="Kimura K."/>
            <person name="Makita H."/>
            <person name="Sekine M."/>
            <person name="Obayashi M."/>
            <person name="Nishi T."/>
            <person name="Shibahara T."/>
            <person name="Tanaka T."/>
            <person name="Ishii S."/>
            <person name="Yamamoto J."/>
            <person name="Saito K."/>
            <person name="Kawai Y."/>
            <person name="Isono Y."/>
            <person name="Nakamura Y."/>
            <person name="Nagahari K."/>
            <person name="Murakami K."/>
            <person name="Yasuda T."/>
            <person name="Iwayanagi T."/>
            <person name="Wagatsuma M."/>
            <person name="Shiratori A."/>
            <person name="Sudo H."/>
            <person name="Hosoiri T."/>
            <person name="Kaku Y."/>
            <person name="Kodaira H."/>
            <person name="Kondo H."/>
            <person name="Sugawara M."/>
            <person name="Takahashi M."/>
            <person name="Kanda K."/>
            <person name="Yokoi T."/>
            <person name="Furuya T."/>
            <person name="Kikkawa E."/>
            <person name="Omura Y."/>
            <person name="Abe K."/>
            <person name="Kamihara K."/>
            <person name="Katsuta N."/>
            <person name="Sato K."/>
            <person name="Tanikawa M."/>
            <person name="Yamazaki M."/>
            <person name="Ninomiya K."/>
            <person name="Ishibashi T."/>
            <person name="Yamashita H."/>
            <person name="Murakawa K."/>
            <person name="Fujimori K."/>
            <person name="Tanai H."/>
            <person name="Kimata M."/>
            <person name="Watanabe M."/>
            <person name="Hiraoka S."/>
            <person name="Chiba Y."/>
            <person name="Ishida S."/>
            <person name="Ono Y."/>
            <person name="Takiguchi S."/>
            <person name="Watanabe S."/>
            <person name="Yosida M."/>
            <person name="Hotuta T."/>
            <person name="Kusano J."/>
            <person name="Kanehori K."/>
            <person name="Takahashi-Fujii A."/>
            <person name="Hara H."/>
            <person name="Tanase T.-O."/>
            <person name="Nomura Y."/>
            <person name="Togiya S."/>
            <person name="Komai F."/>
            <person name="Hara R."/>
            <person name="Takeuchi K."/>
            <person name="Arita M."/>
            <person name="Imose N."/>
            <person name="Musashino K."/>
            <person name="Yuuki H."/>
            <person name="Oshima A."/>
            <person name="Sasaki N."/>
            <person name="Aotsuka S."/>
            <person name="Yoshikawa Y."/>
            <person name="Matsunawa H."/>
            <person name="Ichihara T."/>
            <person name="Shiohata N."/>
            <person name="Sano S."/>
            <person name="Moriya S."/>
            <person name="Momiyama H."/>
            <person name="Satoh N."/>
            <person name="Takami S."/>
            <person name="Terashima Y."/>
            <person name="Suzuki O."/>
            <person name="Nakagawa S."/>
            <person name="Senoh A."/>
            <person name="Mizoguchi H."/>
            <person name="Goto Y."/>
            <person name="Shimizu F."/>
            <person name="Wakebe H."/>
            <person name="Hishigaki H."/>
            <person name="Watanabe T."/>
            <person name="Sugiyama A."/>
            <person name="Takemoto M."/>
            <person name="Kawakami B."/>
            <person name="Yamazaki M."/>
            <person name="Watanabe K."/>
            <person name="Kumagai A."/>
            <person name="Itakura S."/>
            <person name="Fukuzumi Y."/>
            <person name="Fujimori Y."/>
            <person name="Komiyama M."/>
            <person name="Tashiro H."/>
            <person name="Tanigami A."/>
            <person name="Fujiwara T."/>
            <person name="Ono T."/>
            <person name="Yamada K."/>
            <person name="Fujii Y."/>
            <person name="Ozaki K."/>
            <person name="Hirao M."/>
            <person name="Ohmori Y."/>
            <person name="Kawabata A."/>
            <person name="Hikiji T."/>
            <person name="Kobatake N."/>
            <person name="Inagaki H."/>
            <person name="Ikema Y."/>
            <person name="Okamoto S."/>
            <person name="Okitani R."/>
            <person name="Kawakami T."/>
            <person name="Noguchi S."/>
            <person name="Itoh T."/>
            <person name="Shigeta K."/>
            <person name="Senba T."/>
            <person name="Matsumura K."/>
            <person name="Nakajima Y."/>
            <person name="Mizuno T."/>
            <person name="Morinaga M."/>
            <person name="Sasaki M."/>
            <person name="Togashi T."/>
            <person name="Oyama M."/>
            <person name="Hata H."/>
            <person name="Watanabe M."/>
            <person name="Komatsu T."/>
            <person name="Mizushima-Sugano J."/>
            <person name="Satoh T."/>
            <person name="Shirai Y."/>
            <person name="Takahashi Y."/>
            <person name="Nakagawa K."/>
            <person name="Okumura K."/>
            <person name="Nagase T."/>
            <person name="Nomura N."/>
            <person name="Kikuchi H."/>
            <person name="Masuho Y."/>
            <person name="Yamashita R."/>
            <person name="Nakai K."/>
            <person name="Yada T."/>
            <person name="Nakamura Y."/>
            <person name="Ohara O."/>
            <person name="Isogai T."/>
            <person name="Sugano S."/>
        </authorList>
    </citation>
    <scope>NUCLEOTIDE SEQUENCE [LARGE SCALE MRNA] (ISOFORMS PDE1C2 AND 3)</scope>
    <source>
        <tissue>Heart</tissue>
    </source>
</reference>
<reference key="3">
    <citation type="journal article" date="2003" name="Nature">
        <title>The DNA sequence of human chromosome 7.</title>
        <authorList>
            <person name="Hillier L.W."/>
            <person name="Fulton R.S."/>
            <person name="Fulton L.A."/>
            <person name="Graves T.A."/>
            <person name="Pepin K.H."/>
            <person name="Wagner-McPherson C."/>
            <person name="Layman D."/>
            <person name="Maas J."/>
            <person name="Jaeger S."/>
            <person name="Walker R."/>
            <person name="Wylie K."/>
            <person name="Sekhon M."/>
            <person name="Becker M.C."/>
            <person name="O'Laughlin M.D."/>
            <person name="Schaller M.E."/>
            <person name="Fewell G.A."/>
            <person name="Delehaunty K.D."/>
            <person name="Miner T.L."/>
            <person name="Nash W.E."/>
            <person name="Cordes M."/>
            <person name="Du H."/>
            <person name="Sun H."/>
            <person name="Edwards J."/>
            <person name="Bradshaw-Cordum H."/>
            <person name="Ali J."/>
            <person name="Andrews S."/>
            <person name="Isak A."/>
            <person name="Vanbrunt A."/>
            <person name="Nguyen C."/>
            <person name="Du F."/>
            <person name="Lamar B."/>
            <person name="Courtney L."/>
            <person name="Kalicki J."/>
            <person name="Ozersky P."/>
            <person name="Bielicki L."/>
            <person name="Scott K."/>
            <person name="Holmes A."/>
            <person name="Harkins R."/>
            <person name="Harris A."/>
            <person name="Strong C.M."/>
            <person name="Hou S."/>
            <person name="Tomlinson C."/>
            <person name="Dauphin-Kohlberg S."/>
            <person name="Kozlowicz-Reilly A."/>
            <person name="Leonard S."/>
            <person name="Rohlfing T."/>
            <person name="Rock S.M."/>
            <person name="Tin-Wollam A.-M."/>
            <person name="Abbott A."/>
            <person name="Minx P."/>
            <person name="Maupin R."/>
            <person name="Strowmatt C."/>
            <person name="Latreille P."/>
            <person name="Miller N."/>
            <person name="Johnson D."/>
            <person name="Murray J."/>
            <person name="Woessner J.P."/>
            <person name="Wendl M.C."/>
            <person name="Yang S.-P."/>
            <person name="Schultz B.R."/>
            <person name="Wallis J.W."/>
            <person name="Spieth J."/>
            <person name="Bieri T.A."/>
            <person name="Nelson J.O."/>
            <person name="Berkowicz N."/>
            <person name="Wohldmann P.E."/>
            <person name="Cook L.L."/>
            <person name="Hickenbotham M.T."/>
            <person name="Eldred J."/>
            <person name="Williams D."/>
            <person name="Bedell J.A."/>
            <person name="Mardis E.R."/>
            <person name="Clifton S.W."/>
            <person name="Chissoe S.L."/>
            <person name="Marra M.A."/>
            <person name="Raymond C."/>
            <person name="Haugen E."/>
            <person name="Gillett W."/>
            <person name="Zhou Y."/>
            <person name="James R."/>
            <person name="Phelps K."/>
            <person name="Iadanoto S."/>
            <person name="Bubb K."/>
            <person name="Simms E."/>
            <person name="Levy R."/>
            <person name="Clendenning J."/>
            <person name="Kaul R."/>
            <person name="Kent W.J."/>
            <person name="Furey T.S."/>
            <person name="Baertsch R.A."/>
            <person name="Brent M.R."/>
            <person name="Keibler E."/>
            <person name="Flicek P."/>
            <person name="Bork P."/>
            <person name="Suyama M."/>
            <person name="Bailey J.A."/>
            <person name="Portnoy M.E."/>
            <person name="Torrents D."/>
            <person name="Chinwalla A.T."/>
            <person name="Gish W.R."/>
            <person name="Eddy S.R."/>
            <person name="McPherson J.D."/>
            <person name="Olson M.V."/>
            <person name="Eichler E.E."/>
            <person name="Green E.D."/>
            <person name="Waterston R.H."/>
            <person name="Wilson R.K."/>
        </authorList>
    </citation>
    <scope>NUCLEOTIDE SEQUENCE [LARGE SCALE GENOMIC DNA]</scope>
</reference>
<reference key="4">
    <citation type="journal article" date="2009" name="Mol. Cell. Proteomics">
        <title>Large-scale proteomics analysis of the human kinome.</title>
        <authorList>
            <person name="Oppermann F.S."/>
            <person name="Gnad F."/>
            <person name="Olsen J.V."/>
            <person name="Hornberger R."/>
            <person name="Greff Z."/>
            <person name="Keri G."/>
            <person name="Mann M."/>
            <person name="Daub H."/>
        </authorList>
    </citation>
    <scope>ACETYLATION [LARGE SCALE ANALYSIS] AT MET-1</scope>
    <scope>IDENTIFICATION BY MASS SPECTROMETRY [LARGE SCALE ANALYSIS]</scope>
</reference>
<reference key="5">
    <citation type="journal article" date="2018" name="Hum. Genet.">
        <title>A dominant variant in the PDE1C gene is associated with nonsyndromic hearing loss.</title>
        <authorList>
            <person name="Wang L."/>
            <person name="Feng Y."/>
            <person name="Yan D."/>
            <person name="Qin L."/>
            <person name="Grati M."/>
            <person name="Mittal R."/>
            <person name="Li T."/>
            <person name="Sundhari A.K."/>
            <person name="Liu Y."/>
            <person name="Chapagain P."/>
            <person name="Blanton S.H."/>
            <person name="Liao S."/>
            <person name="Liu X."/>
        </authorList>
    </citation>
    <scope>INVOLVEMENT IN DFNA74</scope>
    <scope>VARIANT DFNA74 SER-260</scope>
    <scope>CHARACTERIZATION OF VARIANT DFNA74 SER-260</scope>
    <scope>FUNCTION</scope>
    <scope>CATALYTIC ACTIVITY</scope>
    <scope>SUBCELLULAR LOCATION</scope>
</reference>
<keyword id="KW-0007">Acetylation</keyword>
<keyword id="KW-0025">Alternative splicing</keyword>
<keyword id="KW-0112">Calmodulin-binding</keyword>
<keyword id="KW-0114">cAMP</keyword>
<keyword id="KW-0140">cGMP</keyword>
<keyword id="KW-0209">Deafness</keyword>
<keyword id="KW-0225">Disease variant</keyword>
<keyword id="KW-0378">Hydrolase</keyword>
<keyword id="KW-0458">Lysosome</keyword>
<keyword id="KW-0460">Magnesium</keyword>
<keyword id="KW-0479">Metal-binding</keyword>
<keyword id="KW-1010">Non-syndromic deafness</keyword>
<keyword id="KW-1267">Proteomics identification</keyword>
<keyword id="KW-1185">Reference proteome</keyword>
<keyword id="KW-0862">Zinc</keyword>
<gene>
    <name evidence="14" type="primary">PDE1C</name>
</gene>